<comment type="function">
    <molecule>Uromodulin</molecule>
    <text evidence="1">Functions in biogenesis and organization of the apical membrane of epithelial cells of the thick ascending limb of Henle's loop (TALH), where it promotes formation of complex filamentous gel-like structure that may play a role in the water barrier permeability. May serve as a receptor for binding and endocytosis of cytokines (IL-1, IL-2) and TNF. Facilitates neutrophil migration across renal epithelia.</text>
</comment>
<comment type="function">
    <molecule>Uromodulin, secreted form</molecule>
    <text evidence="1 5 7 8">In the urine, may contribute to colloid osmotic pressure, retards passage of positively charged electrolytes and inhibits formation of liquid containing supersaturated salts and subsequent formation of salt crystals (PubMed:14871399, PubMed:15327412). Protects against urinary tract infections by binding to type 1 fimbriated E.coli (PubMed:11134021). Binds to the bacterial adhesin fimH which mediates the stable formation of bacterial aggregates, prevents the binding of E.coli to uroplakins UPK1A and UPK1B which act as urothelial receptors for type I fimbriae, and allows for pathogen clearance through micturation (By similarity). Also promotes aggregation of other bacteria including K.pneumoniae, P.aeruginosa and S.mitis and so may also protect against other uropathogens (By similarity).</text>
</comment>
<comment type="subunit">
    <molecule>Uromodulin, secreted form</molecule>
    <text evidence="1 10">Homodimer that then polymerizes into long filaments (PubMed:26673890). The filaments can additionally assemble laterally to form a sheet (By similarity). The filaments consist of a zigzag-shaped backbone with laterally protruding arms which interact with bacterial adhesin fimH (By similarity). Two fimH molecules can bind to a single UMOD monomer (By similarity).</text>
</comment>
<comment type="subcellular location">
    <molecule>Uromodulin, secreted form</molecule>
    <subcellularLocation>
        <location evidence="10">Secreted</location>
    </subcellularLocation>
    <text evidence="10">Detected in urine.</text>
</comment>
<comment type="subcellular location">
    <subcellularLocation>
        <location evidence="10">Apical cell membrane</location>
        <topology evidence="1">Lipid-anchor</topology>
        <topology evidence="1">GPI-anchor</topology>
    </subcellularLocation>
    <subcellularLocation>
        <location evidence="1">Basolateral cell membrane</location>
        <topology evidence="1">Lipid-anchor</topology>
        <topology evidence="1">GPI-anchor</topology>
    </subcellularLocation>
    <subcellularLocation>
        <location evidence="1">Cell projection</location>
        <location evidence="1">Cilium membrane</location>
    </subcellularLocation>
    <text evidence="1">Only a small fraction sorts to the basolateral pole of tubular epithelial cells compared to apical localization. Secreted into urine after cleavage. Colocalizes with NPHP1 and KIF3A.</text>
</comment>
<comment type="tissue specificity">
    <text evidence="10">Detected in urine (secreted form). Detected in kidney thick ascending limb epithelial cells (at protein level).</text>
</comment>
<comment type="domain">
    <text evidence="1 6 10">The ZP domain mediates polymerization, leading to the formation of long filaments (PubMed:12021773, PubMed:26673890). The core of the filament consists of interlocked ZP domains which assemble into a helical structure. Each ZP domain consists of an N-terminal (ZP-N) and C-terminal (ZP-C) region connected by a flexible linker; the linker allows the ZP domain to wrap around the ZP-C subdomain of the preceding subunit. The heavily glycosylated N-terminal part of the protein (containing several EGF-like domains) forms branches which protrude from the core and are be involved in pathogen capture (By similarity).</text>
</comment>
<comment type="PTM">
    <text evidence="6 10">N-glycosylated.</text>
</comment>
<comment type="PTM">
    <text evidence="9 10">Proteolytically cleaved at a conserved C-terminal proteolytic cleavage site to generate the secreted form found in urine (PubMed:18375198). This cleavage is catalyzed by HPN (PubMed:26673890).</text>
</comment>
<comment type="disruption phenotype">
    <text evidence="7 8">Mice suffer significantly more frequently from urinary tract infections. They shown also spontaneous formation of calcium crystals in adult kidneys, and excessive intake of calcium and oxalate dramatically increases both the frequency and the severity of renal calcium crystal formation in mutant mice, but not in wild-type mice.</text>
</comment>
<reference key="1">
    <citation type="journal article" date="1995" name="Biochim. Biophys. Acta">
        <title>Nucleotide sequence and peptide motifs of mouse uromodulin (Tamm-Horsfall protein) -- the most abundant protein in mammalian urine.</title>
        <authorList>
            <person name="Prasadan K."/>
            <person name="Bates J."/>
            <person name="Badgett A."/>
            <person name="Dell M."/>
            <person name="Sukhatme V."/>
            <person name="Yu H."/>
            <person name="Kumar S."/>
        </authorList>
    </citation>
    <scope>NUCLEOTIDE SEQUENCE [MRNA]</scope>
</reference>
<reference key="2">
    <citation type="journal article" date="2005" name="Science">
        <title>The transcriptional landscape of the mammalian genome.</title>
        <authorList>
            <person name="Carninci P."/>
            <person name="Kasukawa T."/>
            <person name="Katayama S."/>
            <person name="Gough J."/>
            <person name="Frith M.C."/>
            <person name="Maeda N."/>
            <person name="Oyama R."/>
            <person name="Ravasi T."/>
            <person name="Lenhard B."/>
            <person name="Wells C."/>
            <person name="Kodzius R."/>
            <person name="Shimokawa K."/>
            <person name="Bajic V.B."/>
            <person name="Brenner S.E."/>
            <person name="Batalov S."/>
            <person name="Forrest A.R."/>
            <person name="Zavolan M."/>
            <person name="Davis M.J."/>
            <person name="Wilming L.G."/>
            <person name="Aidinis V."/>
            <person name="Allen J.E."/>
            <person name="Ambesi-Impiombato A."/>
            <person name="Apweiler R."/>
            <person name="Aturaliya R.N."/>
            <person name="Bailey T.L."/>
            <person name="Bansal M."/>
            <person name="Baxter L."/>
            <person name="Beisel K.W."/>
            <person name="Bersano T."/>
            <person name="Bono H."/>
            <person name="Chalk A.M."/>
            <person name="Chiu K.P."/>
            <person name="Choudhary V."/>
            <person name="Christoffels A."/>
            <person name="Clutterbuck D.R."/>
            <person name="Crowe M.L."/>
            <person name="Dalla E."/>
            <person name="Dalrymple B.P."/>
            <person name="de Bono B."/>
            <person name="Della Gatta G."/>
            <person name="di Bernardo D."/>
            <person name="Down T."/>
            <person name="Engstrom P."/>
            <person name="Fagiolini M."/>
            <person name="Faulkner G."/>
            <person name="Fletcher C.F."/>
            <person name="Fukushima T."/>
            <person name="Furuno M."/>
            <person name="Futaki S."/>
            <person name="Gariboldi M."/>
            <person name="Georgii-Hemming P."/>
            <person name="Gingeras T.R."/>
            <person name="Gojobori T."/>
            <person name="Green R.E."/>
            <person name="Gustincich S."/>
            <person name="Harbers M."/>
            <person name="Hayashi Y."/>
            <person name="Hensch T.K."/>
            <person name="Hirokawa N."/>
            <person name="Hill D."/>
            <person name="Huminiecki L."/>
            <person name="Iacono M."/>
            <person name="Ikeo K."/>
            <person name="Iwama A."/>
            <person name="Ishikawa T."/>
            <person name="Jakt M."/>
            <person name="Kanapin A."/>
            <person name="Katoh M."/>
            <person name="Kawasawa Y."/>
            <person name="Kelso J."/>
            <person name="Kitamura H."/>
            <person name="Kitano H."/>
            <person name="Kollias G."/>
            <person name="Krishnan S.P."/>
            <person name="Kruger A."/>
            <person name="Kummerfeld S.K."/>
            <person name="Kurochkin I.V."/>
            <person name="Lareau L.F."/>
            <person name="Lazarevic D."/>
            <person name="Lipovich L."/>
            <person name="Liu J."/>
            <person name="Liuni S."/>
            <person name="McWilliam S."/>
            <person name="Madan Babu M."/>
            <person name="Madera M."/>
            <person name="Marchionni L."/>
            <person name="Matsuda H."/>
            <person name="Matsuzawa S."/>
            <person name="Miki H."/>
            <person name="Mignone F."/>
            <person name="Miyake S."/>
            <person name="Morris K."/>
            <person name="Mottagui-Tabar S."/>
            <person name="Mulder N."/>
            <person name="Nakano N."/>
            <person name="Nakauchi H."/>
            <person name="Ng P."/>
            <person name="Nilsson R."/>
            <person name="Nishiguchi S."/>
            <person name="Nishikawa S."/>
            <person name="Nori F."/>
            <person name="Ohara O."/>
            <person name="Okazaki Y."/>
            <person name="Orlando V."/>
            <person name="Pang K.C."/>
            <person name="Pavan W.J."/>
            <person name="Pavesi G."/>
            <person name="Pesole G."/>
            <person name="Petrovsky N."/>
            <person name="Piazza S."/>
            <person name="Reed J."/>
            <person name="Reid J.F."/>
            <person name="Ring B.Z."/>
            <person name="Ringwald M."/>
            <person name="Rost B."/>
            <person name="Ruan Y."/>
            <person name="Salzberg S.L."/>
            <person name="Sandelin A."/>
            <person name="Schneider C."/>
            <person name="Schoenbach C."/>
            <person name="Sekiguchi K."/>
            <person name="Semple C.A."/>
            <person name="Seno S."/>
            <person name="Sessa L."/>
            <person name="Sheng Y."/>
            <person name="Shibata Y."/>
            <person name="Shimada H."/>
            <person name="Shimada K."/>
            <person name="Silva D."/>
            <person name="Sinclair B."/>
            <person name="Sperling S."/>
            <person name="Stupka E."/>
            <person name="Sugiura K."/>
            <person name="Sultana R."/>
            <person name="Takenaka Y."/>
            <person name="Taki K."/>
            <person name="Tammoja K."/>
            <person name="Tan S.L."/>
            <person name="Tang S."/>
            <person name="Taylor M.S."/>
            <person name="Tegner J."/>
            <person name="Teichmann S.A."/>
            <person name="Ueda H.R."/>
            <person name="van Nimwegen E."/>
            <person name="Verardo R."/>
            <person name="Wei C.L."/>
            <person name="Yagi K."/>
            <person name="Yamanishi H."/>
            <person name="Zabarovsky E."/>
            <person name="Zhu S."/>
            <person name="Zimmer A."/>
            <person name="Hide W."/>
            <person name="Bult C."/>
            <person name="Grimmond S.M."/>
            <person name="Teasdale R.D."/>
            <person name="Liu E.T."/>
            <person name="Brusic V."/>
            <person name="Quackenbush J."/>
            <person name="Wahlestedt C."/>
            <person name="Mattick J.S."/>
            <person name="Hume D.A."/>
            <person name="Kai C."/>
            <person name="Sasaki D."/>
            <person name="Tomaru Y."/>
            <person name="Fukuda S."/>
            <person name="Kanamori-Katayama M."/>
            <person name="Suzuki M."/>
            <person name="Aoki J."/>
            <person name="Arakawa T."/>
            <person name="Iida J."/>
            <person name="Imamura K."/>
            <person name="Itoh M."/>
            <person name="Kato T."/>
            <person name="Kawaji H."/>
            <person name="Kawagashira N."/>
            <person name="Kawashima T."/>
            <person name="Kojima M."/>
            <person name="Kondo S."/>
            <person name="Konno H."/>
            <person name="Nakano K."/>
            <person name="Ninomiya N."/>
            <person name="Nishio T."/>
            <person name="Okada M."/>
            <person name="Plessy C."/>
            <person name="Shibata K."/>
            <person name="Shiraki T."/>
            <person name="Suzuki S."/>
            <person name="Tagami M."/>
            <person name="Waki K."/>
            <person name="Watahiki A."/>
            <person name="Okamura-Oho Y."/>
            <person name="Suzuki H."/>
            <person name="Kawai J."/>
            <person name="Hayashizaki Y."/>
        </authorList>
    </citation>
    <scope>NUCLEOTIDE SEQUENCE [LARGE SCALE MRNA]</scope>
    <source>
        <strain>C57BL/6J</strain>
        <tissue>Kidney</tissue>
    </source>
</reference>
<reference key="3">
    <citation type="journal article" date="2004" name="Genome Res.">
        <title>The status, quality, and expansion of the NIH full-length cDNA project: the Mammalian Gene Collection (MGC).</title>
        <authorList>
            <consortium name="The MGC Project Team"/>
        </authorList>
    </citation>
    <scope>NUCLEOTIDE SEQUENCE [LARGE SCALE MRNA]</scope>
    <source>
        <strain>FVB/N</strain>
        <tissue>Liver</tissue>
    </source>
</reference>
<reference key="4">
    <citation type="journal article" date="2001" name="J. Biol. Chem.">
        <title>Tamm-Horsfall protein binds to type 1 fimbriated Escherichia coli and prevents E. coli from binding to uroplakin Ia and Ib receptors.</title>
        <authorList>
            <person name="Pak J."/>
            <person name="Pu Y."/>
            <person name="Zhang Z.T."/>
            <person name="Hasty D.L."/>
            <person name="Wu X.R."/>
        </authorList>
    </citation>
    <scope>FUNCTION</scope>
</reference>
<reference key="5">
    <citation type="journal article" date="2002" name="Nat. Cell Biol.">
        <title>The ZP domain is a conserved module for polymerization of extracellular proteins.</title>
        <authorList>
            <person name="Jovine L."/>
            <person name="Qi H."/>
            <person name="Williams Z."/>
            <person name="Litscher E."/>
            <person name="Wassarman P.M."/>
        </authorList>
    </citation>
    <scope>GLYCOSYLATION</scope>
    <scope>DOMAIN ZP</scope>
</reference>
<reference key="6">
    <citation type="journal article" date="2004" name="Kidney Int.">
        <title>Tamm-Horsfall protein knockout mice are more prone to urinary tract infection: rapid communication.</title>
        <authorList>
            <person name="Bates J.M."/>
            <person name="Raffi H.M."/>
            <person name="Prasadan K."/>
            <person name="Mascarenhas R."/>
            <person name="Laszik Z."/>
            <person name="Maeda N."/>
            <person name="Hultgren S.J."/>
            <person name="Kumar S."/>
        </authorList>
    </citation>
    <scope>DISRUPTION PHENOTYPE</scope>
    <scope>FUNCTION</scope>
</reference>
<reference key="7">
    <citation type="journal article" date="2004" name="Kidney Int.">
        <title>Tamm-Horsfall protein is a critical renal defense factor protecting against calcium oxalate crystal formation.</title>
        <authorList>
            <person name="Mo L."/>
            <person name="Huang H.Y."/>
            <person name="Zhu X.H."/>
            <person name="Shapiro E."/>
            <person name="Hasty D.L."/>
            <person name="Wu X.R."/>
        </authorList>
    </citation>
    <scope>DISRUPTION PHENOTYPE</scope>
    <scope>FUNCTION</scope>
</reference>
<reference key="8">
    <citation type="journal article" date="2008" name="Biochem. Biophys. Res. Commun.">
        <title>Urinary uromodulin carries an intact ZP domain generated by a conserved C-terminal proteolytic cleavage.</title>
        <authorList>
            <person name="Santambrogio S."/>
            <person name="Cattaneo A."/>
            <person name="Bernascone I."/>
            <person name="Schwend T."/>
            <person name="Jovine L."/>
            <person name="Bachi A."/>
            <person name="Rampoldi L."/>
        </authorList>
    </citation>
    <scope>PROTEIN SEQUENCE OF 573-587</scope>
    <scope>PROTEOLYTIC CLEAVAGE</scope>
    <scope>IDENTIFICATION BY MASS SPECTROMETRY</scope>
</reference>
<reference key="9">
    <citation type="journal article" date="2010" name="Cell">
        <title>A tissue-specific atlas of mouse protein phosphorylation and expression.</title>
        <authorList>
            <person name="Huttlin E.L."/>
            <person name="Jedrychowski M.P."/>
            <person name="Elias J.E."/>
            <person name="Goswami T."/>
            <person name="Rad R."/>
            <person name="Beausoleil S.A."/>
            <person name="Villen J."/>
            <person name="Haas W."/>
            <person name="Sowa M.E."/>
            <person name="Gygi S.P."/>
        </authorList>
    </citation>
    <scope>IDENTIFICATION BY MASS SPECTROMETRY [LARGE SCALE ANALYSIS]</scope>
    <source>
        <tissue>Kidney</tissue>
    </source>
</reference>
<reference key="10">
    <citation type="journal article" date="2015" name="Elife">
        <title>The serine protease hepsin mediates urinary secretion and polymerisation of Zona Pellucida domain protein uromodulin.</title>
        <authorList>
            <person name="Brunati M."/>
            <person name="Perucca S."/>
            <person name="Han L."/>
            <person name="Cattaneo A."/>
            <person name="Consolato F."/>
            <person name="Andolfo A."/>
            <person name="Schaeffer C."/>
            <person name="Olinger E."/>
            <person name="Peng J."/>
            <person name="Santambrogio S."/>
            <person name="Perrier R."/>
            <person name="Li S."/>
            <person name="Bokhove M."/>
            <person name="Bachi A."/>
            <person name="Hummler E."/>
            <person name="Devuyst O."/>
            <person name="Wu Q."/>
            <person name="Jovine L."/>
            <person name="Rampoldi L."/>
        </authorList>
    </citation>
    <scope>SUBUNIT</scope>
    <scope>SUBCELLULAR LOCATION</scope>
    <scope>GLYCOSYLATION</scope>
    <scope>IDENTIFICATION BY MASS SPECTROMETRY</scope>
    <scope>TISSUE SPECIFICITY</scope>
    <scope>DOMAIN</scope>
</reference>
<keyword id="KW-1003">Cell membrane</keyword>
<keyword id="KW-0966">Cell projection</keyword>
<keyword id="KW-0903">Direct protein sequencing</keyword>
<keyword id="KW-1015">Disulfide bond</keyword>
<keyword id="KW-0245">EGF-like domain</keyword>
<keyword id="KW-0325">Glycoprotein</keyword>
<keyword id="KW-0336">GPI-anchor</keyword>
<keyword id="KW-0391">Immunity</keyword>
<keyword id="KW-0399">Innate immunity</keyword>
<keyword id="KW-0449">Lipoprotein</keyword>
<keyword id="KW-0472">Membrane</keyword>
<keyword id="KW-1185">Reference proteome</keyword>
<keyword id="KW-0677">Repeat</keyword>
<keyword id="KW-0964">Secreted</keyword>
<keyword id="KW-0732">Signal</keyword>
<accession>Q91X17</accession>
<accession>Q3TN64</accession>
<accession>Q3TP60</accession>
<accession>Q62285</accession>
<protein>
    <recommendedName>
        <fullName>Uromodulin</fullName>
    </recommendedName>
    <alternativeName>
        <fullName>Tamm-Horsfall urinary glycoprotein</fullName>
        <shortName>THP</shortName>
    </alternativeName>
    <component>
        <recommendedName>
            <fullName>Uromodulin, secreted form</fullName>
        </recommendedName>
    </component>
</protein>
<name>UROM_MOUSE</name>
<dbReference type="EMBL" id="L33406">
    <property type="protein sequence ID" value="AAA73896.1"/>
    <property type="molecule type" value="mRNA"/>
</dbReference>
<dbReference type="EMBL" id="AK085460">
    <property type="protein sequence ID" value="BAC39452.1"/>
    <property type="molecule type" value="mRNA"/>
</dbReference>
<dbReference type="EMBL" id="AK144065">
    <property type="protein sequence ID" value="BAE25681.1"/>
    <property type="molecule type" value="mRNA"/>
</dbReference>
<dbReference type="EMBL" id="AK164688">
    <property type="protein sequence ID" value="BAE37877.1"/>
    <property type="molecule type" value="mRNA"/>
</dbReference>
<dbReference type="EMBL" id="AK165507">
    <property type="protein sequence ID" value="BAE38225.1"/>
    <property type="molecule type" value="mRNA"/>
</dbReference>
<dbReference type="EMBL" id="BC012973">
    <property type="protein sequence ID" value="AAH12973.1"/>
    <property type="molecule type" value="mRNA"/>
</dbReference>
<dbReference type="CCDS" id="CCDS21780.1"/>
<dbReference type="PIR" id="S52111">
    <property type="entry name" value="S52111"/>
</dbReference>
<dbReference type="RefSeq" id="NP_001265534.1">
    <property type="nucleotide sequence ID" value="NM_001278605.1"/>
</dbReference>
<dbReference type="RefSeq" id="NP_033496.1">
    <property type="nucleotide sequence ID" value="NM_009470.5"/>
</dbReference>
<dbReference type="SMR" id="Q91X17"/>
<dbReference type="FunCoup" id="Q91X17">
    <property type="interactions" value="37"/>
</dbReference>
<dbReference type="IntAct" id="Q91X17">
    <property type="interactions" value="1"/>
</dbReference>
<dbReference type="MINT" id="Q91X17"/>
<dbReference type="STRING" id="10090.ENSMUSP00000033263"/>
<dbReference type="GlyCosmos" id="Q91X17">
    <property type="glycosylation" value="10 sites, No reported glycans"/>
</dbReference>
<dbReference type="GlyGen" id="Q91X17">
    <property type="glycosylation" value="12 sites, 1 N-linked glycan (1 site)"/>
</dbReference>
<dbReference type="iPTMnet" id="Q91X17"/>
<dbReference type="PhosphoSitePlus" id="Q91X17"/>
<dbReference type="CPTAC" id="non-CPTAC-3626"/>
<dbReference type="jPOST" id="Q91X17"/>
<dbReference type="PaxDb" id="10090-ENSMUSP00000033263"/>
<dbReference type="ProteomicsDB" id="297899"/>
<dbReference type="Antibodypedia" id="4003">
    <property type="antibodies" value="552 antibodies from 37 providers"/>
</dbReference>
<dbReference type="DNASU" id="22242"/>
<dbReference type="Ensembl" id="ENSMUST00000033263.6">
    <property type="protein sequence ID" value="ENSMUSP00000033263.5"/>
    <property type="gene ID" value="ENSMUSG00000030963.7"/>
</dbReference>
<dbReference type="Ensembl" id="ENSMUST00000209095.2">
    <property type="protein sequence ID" value="ENSMUSP00000146652.2"/>
    <property type="gene ID" value="ENSMUSG00000030963.7"/>
</dbReference>
<dbReference type="GeneID" id="22242"/>
<dbReference type="KEGG" id="mmu:22242"/>
<dbReference type="UCSC" id="uc009jlb.2">
    <property type="organism name" value="mouse"/>
</dbReference>
<dbReference type="AGR" id="MGI:102674"/>
<dbReference type="CTD" id="7369"/>
<dbReference type="MGI" id="MGI:102674">
    <property type="gene designation" value="Umod"/>
</dbReference>
<dbReference type="VEuPathDB" id="HostDB:ENSMUSG00000030963"/>
<dbReference type="eggNOG" id="ENOG502QT6B">
    <property type="taxonomic scope" value="Eukaryota"/>
</dbReference>
<dbReference type="GeneTree" id="ENSGT00940000156742"/>
<dbReference type="HOGENOM" id="CLU_028679_0_0_1"/>
<dbReference type="InParanoid" id="Q91X17"/>
<dbReference type="OMA" id="PPECYLA"/>
<dbReference type="OrthoDB" id="2015116at2759"/>
<dbReference type="PhylomeDB" id="Q91X17"/>
<dbReference type="TreeFam" id="TF330284"/>
<dbReference type="Reactome" id="R-MMU-446203">
    <property type="pathway name" value="Asparagine N-linked glycosylation"/>
</dbReference>
<dbReference type="BioGRID-ORCS" id="22242">
    <property type="hits" value="3 hits in 77 CRISPR screens"/>
</dbReference>
<dbReference type="ChiTaRS" id="Umod">
    <property type="organism name" value="mouse"/>
</dbReference>
<dbReference type="PRO" id="PR:Q91X17"/>
<dbReference type="Proteomes" id="UP000000589">
    <property type="component" value="Chromosome 7"/>
</dbReference>
<dbReference type="RNAct" id="Q91X17">
    <property type="molecule type" value="protein"/>
</dbReference>
<dbReference type="Bgee" id="ENSMUSG00000030963">
    <property type="expression patterns" value="Expressed in adult mammalian kidney and 59 other cell types or tissues"/>
</dbReference>
<dbReference type="ExpressionAtlas" id="Q91X17">
    <property type="expression patterns" value="baseline and differential"/>
</dbReference>
<dbReference type="GO" id="GO:0016324">
    <property type="term" value="C:apical plasma membrane"/>
    <property type="evidence" value="ECO:0000314"/>
    <property type="project" value="MGI"/>
</dbReference>
<dbReference type="GO" id="GO:0016323">
    <property type="term" value="C:basolateral plasma membrane"/>
    <property type="evidence" value="ECO:0000250"/>
    <property type="project" value="UniProtKB"/>
</dbReference>
<dbReference type="GO" id="GO:0060170">
    <property type="term" value="C:ciliary membrane"/>
    <property type="evidence" value="ECO:0007669"/>
    <property type="project" value="UniProtKB-SubCell"/>
</dbReference>
<dbReference type="GO" id="GO:0005929">
    <property type="term" value="C:cilium"/>
    <property type="evidence" value="ECO:0000314"/>
    <property type="project" value="MGI"/>
</dbReference>
<dbReference type="GO" id="GO:0005783">
    <property type="term" value="C:endoplasmic reticulum"/>
    <property type="evidence" value="ECO:0000314"/>
    <property type="project" value="MGI"/>
</dbReference>
<dbReference type="GO" id="GO:0005615">
    <property type="term" value="C:extracellular space"/>
    <property type="evidence" value="ECO:0000314"/>
    <property type="project" value="MGI"/>
</dbReference>
<dbReference type="GO" id="GO:0016020">
    <property type="term" value="C:membrane"/>
    <property type="evidence" value="ECO:0000250"/>
    <property type="project" value="UniProtKB"/>
</dbReference>
<dbReference type="GO" id="GO:0005886">
    <property type="term" value="C:plasma membrane"/>
    <property type="evidence" value="ECO:0000314"/>
    <property type="project" value="MGI"/>
</dbReference>
<dbReference type="GO" id="GO:0098552">
    <property type="term" value="C:side of membrane"/>
    <property type="evidence" value="ECO:0007669"/>
    <property type="project" value="UniProtKB-KW"/>
</dbReference>
<dbReference type="GO" id="GO:0000922">
    <property type="term" value="C:spindle pole"/>
    <property type="evidence" value="ECO:0000250"/>
    <property type="project" value="UniProtKB"/>
</dbReference>
<dbReference type="GO" id="GO:0005509">
    <property type="term" value="F:calcium ion binding"/>
    <property type="evidence" value="ECO:0007669"/>
    <property type="project" value="InterPro"/>
</dbReference>
<dbReference type="GO" id="GO:0019864">
    <property type="term" value="F:IgG binding"/>
    <property type="evidence" value="ECO:0007669"/>
    <property type="project" value="Ensembl"/>
</dbReference>
<dbReference type="GO" id="GO:0140367">
    <property type="term" value="P:antibacterial innate immune response"/>
    <property type="evidence" value="ECO:0000250"/>
    <property type="project" value="UniProtKB"/>
</dbReference>
<dbReference type="GO" id="GO:0006915">
    <property type="term" value="P:apoptotic process"/>
    <property type="evidence" value="ECO:0000315"/>
    <property type="project" value="MGI"/>
</dbReference>
<dbReference type="GO" id="GO:0097190">
    <property type="term" value="P:apoptotic signaling pathway"/>
    <property type="evidence" value="ECO:0000315"/>
    <property type="project" value="MGI"/>
</dbReference>
<dbReference type="GO" id="GO:0006914">
    <property type="term" value="P:autophagy"/>
    <property type="evidence" value="ECO:0000315"/>
    <property type="project" value="MGI"/>
</dbReference>
<dbReference type="GO" id="GO:0055074">
    <property type="term" value="P:calcium ion homeostasis"/>
    <property type="evidence" value="ECO:0000315"/>
    <property type="project" value="MGI"/>
</dbReference>
<dbReference type="GO" id="GO:0033554">
    <property type="term" value="P:cellular response to stress"/>
    <property type="evidence" value="ECO:0000315"/>
    <property type="project" value="MGI"/>
</dbReference>
<dbReference type="GO" id="GO:0034620">
    <property type="term" value="P:cellular response to unfolded protein"/>
    <property type="evidence" value="ECO:0000315"/>
    <property type="project" value="MGI"/>
</dbReference>
<dbReference type="GO" id="GO:0061077">
    <property type="term" value="P:chaperone-mediated protein folding"/>
    <property type="evidence" value="ECO:0000315"/>
    <property type="project" value="MGI"/>
</dbReference>
<dbReference type="GO" id="GO:0048878">
    <property type="term" value="P:chemical homeostasis"/>
    <property type="evidence" value="ECO:0000315"/>
    <property type="project" value="MGI"/>
</dbReference>
<dbReference type="GO" id="GO:0055064">
    <property type="term" value="P:chloride ion homeostasis"/>
    <property type="evidence" value="ECO:0000315"/>
    <property type="project" value="MGI"/>
</dbReference>
<dbReference type="GO" id="GO:0046720">
    <property type="term" value="P:citric acid secretion"/>
    <property type="evidence" value="ECO:0000315"/>
    <property type="project" value="MGI"/>
</dbReference>
<dbReference type="GO" id="GO:0072044">
    <property type="term" value="P:collecting duct development"/>
    <property type="evidence" value="ECO:0000315"/>
    <property type="project" value="MGI"/>
</dbReference>
<dbReference type="GO" id="GO:0097709">
    <property type="term" value="P:connective tissue replacement"/>
    <property type="evidence" value="ECO:0000315"/>
    <property type="project" value="MGI"/>
</dbReference>
<dbReference type="GO" id="GO:0050829">
    <property type="term" value="P:defense response to Gram-negative bacterium"/>
    <property type="evidence" value="ECO:0000315"/>
    <property type="project" value="MGI"/>
</dbReference>
<dbReference type="GO" id="GO:0007029">
    <property type="term" value="P:endoplasmic reticulum organization"/>
    <property type="evidence" value="ECO:0000315"/>
    <property type="project" value="MGI"/>
</dbReference>
<dbReference type="GO" id="GO:0036503">
    <property type="term" value="P:ERAD pathway"/>
    <property type="evidence" value="ECO:0000315"/>
    <property type="project" value="MGI"/>
</dbReference>
<dbReference type="GO" id="GO:0010467">
    <property type="term" value="P:gene expression"/>
    <property type="evidence" value="ECO:0000315"/>
    <property type="project" value="MGI"/>
</dbReference>
<dbReference type="GO" id="GO:0003094">
    <property type="term" value="P:glomerular filtration"/>
    <property type="evidence" value="ECO:0000315"/>
    <property type="project" value="MGI"/>
</dbReference>
<dbReference type="GO" id="GO:0007157">
    <property type="term" value="P:heterophilic cell-cell adhesion via plasma membrane cell adhesion molecules"/>
    <property type="evidence" value="ECO:0007669"/>
    <property type="project" value="Ensembl"/>
</dbReference>
<dbReference type="GO" id="GO:0006954">
    <property type="term" value="P:inflammatory response"/>
    <property type="evidence" value="ECO:0000315"/>
    <property type="project" value="MGI"/>
</dbReference>
<dbReference type="GO" id="GO:0006874">
    <property type="term" value="P:intracellular calcium ion homeostasis"/>
    <property type="evidence" value="ECO:0000315"/>
    <property type="project" value="MGI"/>
</dbReference>
<dbReference type="GO" id="GO:0030644">
    <property type="term" value="P:intracellular chloride ion homeostasis"/>
    <property type="evidence" value="ECO:0000314"/>
    <property type="project" value="MGI"/>
</dbReference>
<dbReference type="GO" id="GO:0030643">
    <property type="term" value="P:intracellular phosphate ion homeostasis"/>
    <property type="evidence" value="ECO:0000315"/>
    <property type="project" value="MGI"/>
</dbReference>
<dbReference type="GO" id="GO:0006883">
    <property type="term" value="P:intracellular sodium ion homeostasis"/>
    <property type="evidence" value="ECO:0000315"/>
    <property type="project" value="MGI"/>
</dbReference>
<dbReference type="GO" id="GO:0072051">
    <property type="term" value="P:juxtaglomerular apparatus development"/>
    <property type="evidence" value="ECO:0000315"/>
    <property type="project" value="MGI"/>
</dbReference>
<dbReference type="GO" id="GO:0001822">
    <property type="term" value="P:kidney development"/>
    <property type="evidence" value="ECO:0000315"/>
    <property type="project" value="MGI"/>
</dbReference>
<dbReference type="GO" id="GO:0007159">
    <property type="term" value="P:leukocyte cell-cell adhesion"/>
    <property type="evidence" value="ECO:0007669"/>
    <property type="project" value="Ensembl"/>
</dbReference>
<dbReference type="GO" id="GO:0006629">
    <property type="term" value="P:lipid metabolic process"/>
    <property type="evidence" value="ECO:0000315"/>
    <property type="project" value="MGI"/>
</dbReference>
<dbReference type="GO" id="GO:0072070">
    <property type="term" value="P:loop of Henle development"/>
    <property type="evidence" value="ECO:0000315"/>
    <property type="project" value="MGI"/>
</dbReference>
<dbReference type="GO" id="GO:0072218">
    <property type="term" value="P:metanephric ascending thin limb development"/>
    <property type="evidence" value="ECO:0000270"/>
    <property type="project" value="UniProtKB"/>
</dbReference>
<dbReference type="GO" id="GO:0072221">
    <property type="term" value="P:metanephric distal convoluted tubule development"/>
    <property type="evidence" value="ECO:0000270"/>
    <property type="project" value="UniProtKB"/>
</dbReference>
<dbReference type="GO" id="GO:0072233">
    <property type="term" value="P:metanephric thick ascending limb development"/>
    <property type="evidence" value="ECO:0000270"/>
    <property type="project" value="UniProtKB"/>
</dbReference>
<dbReference type="GO" id="GO:0060073">
    <property type="term" value="P:micturition"/>
    <property type="evidence" value="ECO:0000315"/>
    <property type="project" value="MGI"/>
</dbReference>
<dbReference type="GO" id="GO:0050801">
    <property type="term" value="P:monoatomic ion homeostasis"/>
    <property type="evidence" value="ECO:0000315"/>
    <property type="project" value="UniProtKB"/>
</dbReference>
<dbReference type="GO" id="GO:0033555">
    <property type="term" value="P:multicellular organismal response to stress"/>
    <property type="evidence" value="ECO:0000315"/>
    <property type="project" value="MGI"/>
</dbReference>
<dbReference type="GO" id="GO:0048871">
    <property type="term" value="P:multicellular organismal-level homeostasis"/>
    <property type="evidence" value="ECO:0000315"/>
    <property type="project" value="MGI"/>
</dbReference>
<dbReference type="GO" id="GO:0050891">
    <property type="term" value="P:multicellular organismal-level water homeostasis"/>
    <property type="evidence" value="ECO:0000315"/>
    <property type="project" value="MGI"/>
</dbReference>
<dbReference type="GO" id="GO:1990266">
    <property type="term" value="P:neutrophil migration"/>
    <property type="evidence" value="ECO:0007669"/>
    <property type="project" value="Ensembl"/>
</dbReference>
<dbReference type="GO" id="GO:0002251">
    <property type="term" value="P:organ or tissue specific immune response"/>
    <property type="evidence" value="ECO:0000315"/>
    <property type="project" value="MGI"/>
</dbReference>
<dbReference type="GO" id="GO:0055062">
    <property type="term" value="P:phosphate ion homeostasis"/>
    <property type="evidence" value="ECO:0000315"/>
    <property type="project" value="MGI"/>
</dbReference>
<dbReference type="GO" id="GO:0055075">
    <property type="term" value="P:potassium ion homeostasis"/>
    <property type="evidence" value="ECO:0000315"/>
    <property type="project" value="MGI"/>
</dbReference>
<dbReference type="GO" id="GO:0072665">
    <property type="term" value="P:protein localization to vacuole"/>
    <property type="evidence" value="ECO:0000315"/>
    <property type="project" value="MGI"/>
</dbReference>
<dbReference type="GO" id="GO:0044861">
    <property type="term" value="P:protein transport into plasma membrane raft"/>
    <property type="evidence" value="ECO:0000315"/>
    <property type="project" value="MGI"/>
</dbReference>
<dbReference type="GO" id="GO:0008217">
    <property type="term" value="P:regulation of blood pressure"/>
    <property type="evidence" value="ECO:0000315"/>
    <property type="project" value="MGI"/>
</dbReference>
<dbReference type="GO" id="GO:0051223">
    <property type="term" value="P:regulation of protein transport"/>
    <property type="evidence" value="ECO:0000315"/>
    <property type="project" value="MGI"/>
</dbReference>
<dbReference type="GO" id="GO:0035809">
    <property type="term" value="P:regulation of urine volume"/>
    <property type="evidence" value="ECO:0000315"/>
    <property type="project" value="MGI"/>
</dbReference>
<dbReference type="GO" id="GO:0070294">
    <property type="term" value="P:renal sodium ion absorption"/>
    <property type="evidence" value="ECO:0000314"/>
    <property type="project" value="MGI"/>
</dbReference>
<dbReference type="GO" id="GO:0097744">
    <property type="term" value="P:renal urate salt excretion"/>
    <property type="evidence" value="ECO:0000315"/>
    <property type="project" value="MGI"/>
</dbReference>
<dbReference type="GO" id="GO:0003091">
    <property type="term" value="P:renal water homeostasis"/>
    <property type="evidence" value="ECO:0000315"/>
    <property type="project" value="MGI"/>
</dbReference>
<dbReference type="GO" id="GO:0034976">
    <property type="term" value="P:response to endoplasmic reticulum stress"/>
    <property type="evidence" value="ECO:0000315"/>
    <property type="project" value="MGI"/>
</dbReference>
<dbReference type="GO" id="GO:0032496">
    <property type="term" value="P:response to lipopolysaccharide"/>
    <property type="evidence" value="ECO:0000314"/>
    <property type="project" value="MGI"/>
</dbReference>
<dbReference type="GO" id="GO:0006986">
    <property type="term" value="P:response to unfolded protein"/>
    <property type="evidence" value="ECO:0000315"/>
    <property type="project" value="MGI"/>
</dbReference>
<dbReference type="GO" id="GO:0009414">
    <property type="term" value="P:response to water deprivation"/>
    <property type="evidence" value="ECO:0000315"/>
    <property type="project" value="MGI"/>
</dbReference>
<dbReference type="GO" id="GO:0009410">
    <property type="term" value="P:response to xenobiotic stimulus"/>
    <property type="evidence" value="ECO:0000315"/>
    <property type="project" value="MGI"/>
</dbReference>
<dbReference type="GO" id="GO:0008380">
    <property type="term" value="P:RNA splicing"/>
    <property type="evidence" value="ECO:0000315"/>
    <property type="project" value="MGI"/>
</dbReference>
<dbReference type="GO" id="GO:0055078">
    <property type="term" value="P:sodium ion homeostasis"/>
    <property type="evidence" value="ECO:0000315"/>
    <property type="project" value="MGI"/>
</dbReference>
<dbReference type="GO" id="GO:0033209">
    <property type="term" value="P:tumor necrosis factor-mediated signaling pathway"/>
    <property type="evidence" value="ECO:0000315"/>
    <property type="project" value="MGI"/>
</dbReference>
<dbReference type="GO" id="GO:0015747">
    <property type="term" value="P:urate transport"/>
    <property type="evidence" value="ECO:0000315"/>
    <property type="project" value="MGI"/>
</dbReference>
<dbReference type="GO" id="GO:0071918">
    <property type="term" value="P:urea transmembrane transport"/>
    <property type="evidence" value="ECO:0000315"/>
    <property type="project" value="MGI"/>
</dbReference>
<dbReference type="CDD" id="cd00054">
    <property type="entry name" value="EGF_CA"/>
    <property type="match status" value="2"/>
</dbReference>
<dbReference type="FunFam" id="2.60.40.4100:FF:000001">
    <property type="entry name" value="alpha-tectorin isoform X1"/>
    <property type="match status" value="1"/>
</dbReference>
<dbReference type="FunFam" id="2.10.25.10:FF:000038">
    <property type="entry name" value="Fibrillin 2"/>
    <property type="match status" value="2"/>
</dbReference>
<dbReference type="FunFam" id="2.60.40.3210:FF:000003">
    <property type="entry name" value="Glycoprotein 2"/>
    <property type="match status" value="1"/>
</dbReference>
<dbReference type="FunFam" id="2.10.25.10:FF:000678">
    <property type="entry name" value="Uromodulin"/>
    <property type="match status" value="1"/>
</dbReference>
<dbReference type="Gene3D" id="2.10.25.10">
    <property type="entry name" value="Laminin"/>
    <property type="match status" value="3"/>
</dbReference>
<dbReference type="Gene3D" id="2.60.40.4100">
    <property type="entry name" value="Zona pellucida, ZP-C domain"/>
    <property type="match status" value="1"/>
</dbReference>
<dbReference type="Gene3D" id="2.60.40.3210">
    <property type="entry name" value="Zona pellucida, ZP-N domain"/>
    <property type="match status" value="1"/>
</dbReference>
<dbReference type="InterPro" id="IPR001881">
    <property type="entry name" value="EGF-like_Ca-bd_dom"/>
</dbReference>
<dbReference type="InterPro" id="IPR000742">
    <property type="entry name" value="EGF-like_dom"/>
</dbReference>
<dbReference type="InterPro" id="IPR000152">
    <property type="entry name" value="EGF-type_Asp/Asn_hydroxyl_site"/>
</dbReference>
<dbReference type="InterPro" id="IPR018097">
    <property type="entry name" value="EGF_Ca-bd_CS"/>
</dbReference>
<dbReference type="InterPro" id="IPR024731">
    <property type="entry name" value="EGF_dom"/>
</dbReference>
<dbReference type="InterPro" id="IPR009030">
    <property type="entry name" value="Growth_fac_rcpt_cys_sf"/>
</dbReference>
<dbReference type="InterPro" id="IPR049883">
    <property type="entry name" value="NOTCH1_EGF-like"/>
</dbReference>
<dbReference type="InterPro" id="IPR055355">
    <property type="entry name" value="ZP-C"/>
</dbReference>
<dbReference type="InterPro" id="IPR042235">
    <property type="entry name" value="ZP-C_dom"/>
</dbReference>
<dbReference type="InterPro" id="IPR048290">
    <property type="entry name" value="ZP_chr"/>
</dbReference>
<dbReference type="InterPro" id="IPR001507">
    <property type="entry name" value="ZP_dom"/>
</dbReference>
<dbReference type="InterPro" id="IPR017977">
    <property type="entry name" value="ZP_dom_CS"/>
</dbReference>
<dbReference type="PANTHER" id="PTHR14002">
    <property type="entry name" value="ENDOGLIN/TGF-BETA RECEPTOR TYPE III"/>
    <property type="match status" value="1"/>
</dbReference>
<dbReference type="PANTHER" id="PTHR14002:SF40">
    <property type="entry name" value="UROMODULIN"/>
    <property type="match status" value="1"/>
</dbReference>
<dbReference type="Pfam" id="PF23283">
    <property type="entry name" value="D8C_UMOD"/>
    <property type="match status" value="1"/>
</dbReference>
<dbReference type="Pfam" id="PF12947">
    <property type="entry name" value="EGF_3"/>
    <property type="match status" value="1"/>
</dbReference>
<dbReference type="Pfam" id="PF07645">
    <property type="entry name" value="EGF_CA"/>
    <property type="match status" value="1"/>
</dbReference>
<dbReference type="Pfam" id="PF00100">
    <property type="entry name" value="Zona_pellucida"/>
    <property type="match status" value="1"/>
</dbReference>
<dbReference type="PRINTS" id="PR00023">
    <property type="entry name" value="ZPELLUCIDA"/>
</dbReference>
<dbReference type="SMART" id="SM00181">
    <property type="entry name" value="EGF"/>
    <property type="match status" value="3"/>
</dbReference>
<dbReference type="SMART" id="SM00179">
    <property type="entry name" value="EGF_CA"/>
    <property type="match status" value="2"/>
</dbReference>
<dbReference type="SMART" id="SM00241">
    <property type="entry name" value="ZP"/>
    <property type="match status" value="1"/>
</dbReference>
<dbReference type="SUPFAM" id="SSF57184">
    <property type="entry name" value="Growth factor receptor domain"/>
    <property type="match status" value="1"/>
</dbReference>
<dbReference type="PROSITE" id="PS00010">
    <property type="entry name" value="ASX_HYDROXYL"/>
    <property type="match status" value="2"/>
</dbReference>
<dbReference type="PROSITE" id="PS01186">
    <property type="entry name" value="EGF_2"/>
    <property type="match status" value="3"/>
</dbReference>
<dbReference type="PROSITE" id="PS50026">
    <property type="entry name" value="EGF_3"/>
    <property type="match status" value="3"/>
</dbReference>
<dbReference type="PROSITE" id="PS01187">
    <property type="entry name" value="EGF_CA"/>
    <property type="match status" value="2"/>
</dbReference>
<dbReference type="PROSITE" id="PS00682">
    <property type="entry name" value="ZP_1"/>
    <property type="match status" value="1"/>
</dbReference>
<dbReference type="PROSITE" id="PS51034">
    <property type="entry name" value="ZP_2"/>
    <property type="match status" value="1"/>
</dbReference>
<organism>
    <name type="scientific">Mus musculus</name>
    <name type="common">Mouse</name>
    <dbReference type="NCBI Taxonomy" id="10090"/>
    <lineage>
        <taxon>Eukaryota</taxon>
        <taxon>Metazoa</taxon>
        <taxon>Chordata</taxon>
        <taxon>Craniata</taxon>
        <taxon>Vertebrata</taxon>
        <taxon>Euteleostomi</taxon>
        <taxon>Mammalia</taxon>
        <taxon>Eutheria</taxon>
        <taxon>Euarchontoglires</taxon>
        <taxon>Glires</taxon>
        <taxon>Rodentia</taxon>
        <taxon>Myomorpha</taxon>
        <taxon>Muroidea</taxon>
        <taxon>Muridae</taxon>
        <taxon>Murinae</taxon>
        <taxon>Mus</taxon>
        <taxon>Mus</taxon>
    </lineage>
</organism>
<gene>
    <name type="primary">Umod</name>
</gene>
<proteinExistence type="evidence at protein level"/>
<sequence>MGIPLTWMLLVMMVTSWFTLAEASNSTEARRCSECHNNATCTVDGVVTTCSCQTGFTGDGLVCEDMDECATPWTHNCSNSSCVNTPGSFKCSCQDGFRLTPELSCTDVDECSEQGLSNCHALATCVNTEGDYLCVCPEGFTGDGWYCECSPGSCEPGLDCLPQGPDGKLVCQDPCNTYETLTEYWRSTEYGVGYSCDAGLHGWYRFTGQGGVRMAETCVPVLRCNTAAPMWLNGSHPSSSEGIVSRTACAHWSDQCCRWSTEIQVKACPGGFYIYNLTAPPECNLAYCTDPSSVEGTCEECRVDEDCISDNGRWRCQCKQDSNITDVSQLEYRLECGANDIKMSLRKCQLQSLGFMNVFMYLNDRQCSGFSESDERDWMSIVTPARNGPCGTVLRRNETHATYSNTLYLANAIIIRDIIIRMNFECSYPLDMKVSLKTSLQPMVSALNISLGGTGKFTVRMALFQSPTYTQPHQGPSVMLSTEAFLYVGTMLDGGDLSRFVLLMTNCYATPSSNSTDPVKYFIIQDSCPRTEDTTIQVTENGESSQARFSVQMFRFAGNYDLVYLHCEVYLCDSTSEQCKPTCSGTRFRSGNFIDQTRVLNLGPITRQGVQASVSKAASSNLRLLSIWLLLFPSATLIFMVQ</sequence>
<evidence type="ECO:0000250" key="1">
    <source>
        <dbReference type="UniProtKB" id="P07911"/>
    </source>
</evidence>
<evidence type="ECO:0000255" key="2"/>
<evidence type="ECO:0000255" key="3">
    <source>
        <dbReference type="PROSITE-ProRule" id="PRU00076"/>
    </source>
</evidence>
<evidence type="ECO:0000255" key="4">
    <source>
        <dbReference type="PROSITE-ProRule" id="PRU00375"/>
    </source>
</evidence>
<evidence type="ECO:0000269" key="5">
    <source>
    </source>
</evidence>
<evidence type="ECO:0000269" key="6">
    <source>
    </source>
</evidence>
<evidence type="ECO:0000269" key="7">
    <source>
    </source>
</evidence>
<evidence type="ECO:0000269" key="8">
    <source>
    </source>
</evidence>
<evidence type="ECO:0000269" key="9">
    <source>
    </source>
</evidence>
<evidence type="ECO:0000269" key="10">
    <source>
    </source>
</evidence>
<evidence type="ECO:0000305" key="11"/>
<feature type="signal peptide" evidence="1">
    <location>
        <begin position="1"/>
        <end position="24"/>
    </location>
</feature>
<feature type="chain" id="PRO_0000041673" description="Uromodulin">
    <location>
        <begin position="25"/>
        <end position="618"/>
    </location>
</feature>
<feature type="chain" id="PRO_0000407910" description="Uromodulin, secreted form">
    <location>
        <begin position="25"/>
        <end position="588"/>
    </location>
</feature>
<feature type="propeptide" id="PRO_0000041674" description="Removed in mature form" evidence="2">
    <location>
        <begin position="619"/>
        <end position="642"/>
    </location>
</feature>
<feature type="domain" description="EGF-like 1" evidence="3">
    <location>
        <begin position="28"/>
        <end position="64"/>
    </location>
</feature>
<feature type="domain" description="EGF-like 2; calcium-binding" evidence="3">
    <location>
        <begin position="65"/>
        <end position="106"/>
    </location>
</feature>
<feature type="domain" description="EGF-like 3; calcium-binding" evidence="3">
    <location>
        <begin position="107"/>
        <end position="148"/>
    </location>
</feature>
<feature type="domain" description="EGF-like 4" evidence="1">
    <location>
        <begin position="293"/>
        <end position="324"/>
    </location>
</feature>
<feature type="domain" description="ZP" evidence="4">
    <location>
        <begin position="335"/>
        <end position="590"/>
    </location>
</feature>
<feature type="region of interest" description="Beta hairpin" evidence="1">
    <location>
        <begin position="149"/>
        <end position="172"/>
    </location>
</feature>
<feature type="region of interest" description="D10C" evidence="1">
    <location>
        <begin position="173"/>
        <end position="292"/>
    </location>
</feature>
<feature type="region of interest" description="ZP-N" evidence="1">
    <location>
        <begin position="335"/>
        <end position="430"/>
    </location>
</feature>
<feature type="region of interest" description="Flexible ZP-N/ZP-C linker; important for secretion and polymerization into filaments" evidence="1">
    <location>
        <begin position="431"/>
        <end position="454"/>
    </location>
</feature>
<feature type="region of interest" description="ZP-C" evidence="1">
    <location>
        <begin position="455"/>
        <end position="590"/>
    </location>
</feature>
<feature type="region of interest" description="Internal hydrophobic patch (IHP)" evidence="1">
    <location>
        <begin position="455"/>
        <end position="465"/>
    </location>
</feature>
<feature type="region of interest" description="Essential for cleavage by HPN" evidence="1">
    <location>
        <begin position="587"/>
        <end position="590"/>
    </location>
</feature>
<feature type="region of interest" description="External hydrophobic patch (EHP); regulates polymerization into filaments" evidence="1">
    <location>
        <begin position="599"/>
        <end position="607"/>
    </location>
</feature>
<feature type="site" description="Cleavage" evidence="9 10">
    <location>
        <begin position="588"/>
        <end position="589"/>
    </location>
</feature>
<feature type="lipid moiety-binding region" description="GPI-anchor amidated alanine" evidence="2">
    <location>
        <position position="618"/>
    </location>
</feature>
<feature type="glycosylation site" description="N-linked (GlcNAc...) asparagine" evidence="2">
    <location>
        <position position="25"/>
    </location>
</feature>
<feature type="glycosylation site" description="N-linked (GlcNAc...) asparagine" evidence="2">
    <location>
        <position position="38"/>
    </location>
</feature>
<feature type="glycosylation site" description="N-linked (GlcNAc...) asparagine" evidence="2">
    <location>
        <position position="76"/>
    </location>
</feature>
<feature type="glycosylation site" description="N-linked (GlcNAc...) asparagine" evidence="2">
    <location>
        <position position="79"/>
    </location>
</feature>
<feature type="glycosylation site" description="N-linked (GlcNAc...) asparagine" evidence="2">
    <location>
        <position position="233"/>
    </location>
</feature>
<feature type="glycosylation site" description="N-linked (GlcNAc...) asparagine" evidence="2">
    <location>
        <position position="276"/>
    </location>
</feature>
<feature type="glycosylation site" description="N-linked (GlcNAc...) asparagine" evidence="2">
    <location>
        <position position="323"/>
    </location>
</feature>
<feature type="glycosylation site" description="N-linked (GlcNAc...) asparagine" evidence="2">
    <location>
        <position position="397"/>
    </location>
</feature>
<feature type="glycosylation site" description="N-linked (GlcNAc...) asparagine" evidence="2">
    <location>
        <position position="448"/>
    </location>
</feature>
<feature type="glycosylation site" description="N-linked (GlcNAc...) asparagine" evidence="2">
    <location>
        <position position="514"/>
    </location>
</feature>
<feature type="disulfide bond" evidence="3">
    <location>
        <begin position="32"/>
        <end position="41"/>
    </location>
</feature>
<feature type="disulfide bond" evidence="3">
    <location>
        <begin position="35"/>
        <end position="50"/>
    </location>
</feature>
<feature type="disulfide bond" evidence="3">
    <location>
        <begin position="52"/>
        <end position="63"/>
    </location>
</feature>
<feature type="disulfide bond" evidence="3">
    <location>
        <begin position="69"/>
        <end position="82"/>
    </location>
</feature>
<feature type="disulfide bond" evidence="3">
    <location>
        <begin position="77"/>
        <end position="91"/>
    </location>
</feature>
<feature type="disulfide bond" evidence="3">
    <location>
        <begin position="93"/>
        <end position="105"/>
    </location>
</feature>
<feature type="disulfide bond" evidence="3">
    <location>
        <begin position="111"/>
        <end position="125"/>
    </location>
</feature>
<feature type="disulfide bond" evidence="3">
    <location>
        <begin position="119"/>
        <end position="134"/>
    </location>
</feature>
<feature type="disulfide bond" evidence="3">
    <location>
        <begin position="136"/>
        <end position="147"/>
    </location>
</feature>
<feature type="disulfide bond" evidence="1">
    <location>
        <begin position="149"/>
        <end position="160"/>
    </location>
</feature>
<feature type="disulfide bond" evidence="1">
    <location>
        <begin position="154"/>
        <end position="171"/>
    </location>
</feature>
<feature type="disulfide bond" evidence="1">
    <location>
        <begin position="175"/>
        <end position="268"/>
    </location>
</feature>
<feature type="disulfide bond" evidence="1">
    <location>
        <begin position="196"/>
        <end position="283"/>
    </location>
</feature>
<feature type="disulfide bond" evidence="1">
    <location>
        <begin position="218"/>
        <end position="256"/>
    </location>
</feature>
<feature type="disulfide bond" evidence="1">
    <location>
        <begin position="224"/>
        <end position="288"/>
    </location>
</feature>
<feature type="disulfide bond" evidence="1">
    <location>
        <begin position="249"/>
        <end position="257"/>
    </location>
</feature>
<feature type="disulfide bond" evidence="1">
    <location>
        <begin position="298"/>
        <end position="307"/>
    </location>
</feature>
<feature type="disulfide bond" evidence="1">
    <location>
        <begin position="301"/>
        <end position="316"/>
    </location>
</feature>
<feature type="disulfide bond" evidence="1">
    <location>
        <begin position="318"/>
        <end position="348"/>
    </location>
</feature>
<feature type="disulfide bond" evidence="1">
    <location>
        <begin position="336"/>
        <end position="426"/>
    </location>
</feature>
<feature type="disulfide bond" evidence="1">
    <location>
        <begin position="367"/>
        <end position="390"/>
    </location>
</feature>
<feature type="disulfide bond" evidence="3">
    <location>
        <begin position="507"/>
        <end position="567"/>
    </location>
</feature>
<feature type="disulfide bond" evidence="1">
    <location>
        <begin position="528"/>
        <end position="583"/>
    </location>
</feature>
<feature type="disulfide bond" evidence="1">
    <location>
        <begin position="572"/>
        <end position="579"/>
    </location>
</feature>
<feature type="sequence conflict" description="In Ref. 1; AAA73896." evidence="11" ref="1">
    <original>E</original>
    <variation>G</variation>
    <location>
        <position position="22"/>
    </location>
</feature>
<feature type="sequence conflict" description="In Ref. 1; AAA73896." evidence="11" ref="1">
    <original>ELS</original>
    <variation>GLG</variation>
    <location>
        <begin position="102"/>
        <end position="104"/>
    </location>
</feature>
<feature type="sequence conflict" description="In Ref. 1; AAA73896." evidence="11" ref="1">
    <original>E</original>
    <variation>K</variation>
    <location>
        <position position="138"/>
    </location>
</feature>
<feature type="sequence conflict" description="In Ref. 1; AAA73896." evidence="11" ref="1">
    <original>G</original>
    <variation>S</variation>
    <location>
        <position position="152"/>
    </location>
</feature>
<feature type="sequence conflict" description="In Ref. 1; AAA73896." evidence="11" ref="1">
    <original>L</original>
    <variation>Q</variation>
    <location>
        <position position="200"/>
    </location>
</feature>
<feature type="sequence conflict" description="In Ref. 1; AAA73896." evidence="11" ref="1">
    <original>R</original>
    <variation>A</variation>
    <location>
        <position position="223"/>
    </location>
</feature>
<feature type="sequence conflict" description="In Ref. 1; AAA73896." evidence="11" ref="1">
    <original>Q</original>
    <variation>H</variation>
    <location>
        <position position="255"/>
    </location>
</feature>
<feature type="sequence conflict" description="In Ref. 1; AAA73896." evidence="11" ref="1">
    <original>A</original>
    <variation>E</variation>
    <location>
        <position position="279"/>
    </location>
</feature>
<feature type="sequence conflict" description="In Ref. 2; BAE38225." evidence="11" ref="2">
    <original>D</original>
    <variation>G</variation>
    <location>
        <position position="340"/>
    </location>
</feature>
<feature type="sequence conflict" description="In Ref. 1; AAA73896." evidence="11" ref="1">
    <original>H</original>
    <variation>Y</variation>
    <location>
        <position position="473"/>
    </location>
</feature>
<feature type="sequence conflict" description="In Ref. 1; AAA73896." evidence="11" ref="1">
    <original>S</original>
    <variation>C</variation>
    <location>
        <position position="590"/>
    </location>
</feature>
<feature type="sequence conflict" description="In Ref. 1; AAA73896." evidence="11" ref="1">
    <original>T</original>
    <variation>TRQ</variation>
    <location>
        <position position="606"/>
    </location>
</feature>
<feature type="sequence conflict" description="In Ref. 1; AAA73896." evidence="11" ref="1">
    <location>
        <begin position="616"/>
        <end position="617"/>
    </location>
</feature>
<feature type="sequence conflict" description="In Ref. 1; AAA73896." evidence="11" ref="1">
    <original>P</original>
    <variation>L</variation>
    <location>
        <position position="633"/>
    </location>
</feature>